<evidence type="ECO:0000305" key="1"/>
<proteinExistence type="evidence at protein level"/>
<reference key="1">
    <citation type="submission" date="1993-10" db="EMBL/GenBank/DDBJ databases">
        <title>Automated multiplex sequencing of the E.coli genome.</title>
        <authorList>
            <person name="Richterich P."/>
            <person name="Lakey N."/>
            <person name="Gryan G."/>
            <person name="Jaehn L."/>
            <person name="Mintz L."/>
            <person name="Robison K."/>
            <person name="Church G.M."/>
        </authorList>
    </citation>
    <scope>NUCLEOTIDE SEQUENCE [LARGE SCALE GENOMIC DNA]</scope>
    <source>
        <strain>K12 / BHB2600</strain>
    </source>
</reference>
<reference key="2">
    <citation type="journal article" date="1997" name="Science">
        <title>The complete genome sequence of Escherichia coli K-12.</title>
        <authorList>
            <person name="Blattner F.R."/>
            <person name="Plunkett G. III"/>
            <person name="Bloch C.A."/>
            <person name="Perna N.T."/>
            <person name="Burland V."/>
            <person name="Riley M."/>
            <person name="Collado-Vides J."/>
            <person name="Glasner J.D."/>
            <person name="Rode C.K."/>
            <person name="Mayhew G.F."/>
            <person name="Gregor J."/>
            <person name="Davis N.W."/>
            <person name="Kirkpatrick H.A."/>
            <person name="Goeden M.A."/>
            <person name="Rose D.J."/>
            <person name="Mau B."/>
            <person name="Shao Y."/>
        </authorList>
    </citation>
    <scope>NUCLEOTIDE SEQUENCE [LARGE SCALE GENOMIC DNA]</scope>
    <source>
        <strain>K12 / MG1655 / ATCC 47076</strain>
    </source>
</reference>
<reference key="3">
    <citation type="journal article" date="2006" name="Mol. Syst. Biol.">
        <title>Highly accurate genome sequences of Escherichia coli K-12 strains MG1655 and W3110.</title>
        <authorList>
            <person name="Hayashi K."/>
            <person name="Morooka N."/>
            <person name="Yamamoto Y."/>
            <person name="Fujita K."/>
            <person name="Isono K."/>
            <person name="Choi S."/>
            <person name="Ohtsubo E."/>
            <person name="Baba T."/>
            <person name="Wanner B.L."/>
            <person name="Mori H."/>
            <person name="Horiuchi T."/>
        </authorList>
    </citation>
    <scope>NUCLEOTIDE SEQUENCE [LARGE SCALE GENOMIC DNA]</scope>
    <source>
        <strain>K12 / W3110 / ATCC 27325 / DSM 5911</strain>
    </source>
</reference>
<comment type="interaction">
    <interactant intactId="EBI-489750">
        <id>P33348</id>
    </interactant>
    <interactant intactId="EBI-560192">
        <id>P0AAT6</id>
        <label>rsfS</label>
    </interactant>
    <organismsDiffer>false</organismsDiffer>
    <experiments>3</experiments>
</comment>
<comment type="sequence caution" evidence="1">
    <conflict type="erroneous initiation">
        <sequence resource="EMBL-CDS" id="AAA60480"/>
    </conflict>
    <text>Extended N-terminus.</text>
</comment>
<keyword id="KW-1185">Reference proteome</keyword>
<name>YEHL_ECOLI</name>
<protein>
    <recommendedName>
        <fullName>Uncharacterized protein YehL</fullName>
    </recommendedName>
</protein>
<sequence length="362" mass="39682">MSPQNNHLQRPPAAVLYADELAKLKQNDNAPCPPGWQLSLPAARAFILGDEAQNISRKVVISPSAVERMLVTLATGRGLMLVGEPGTAKSLLSELLATAISGDAGLTIQGGASTTEDQIKYGWNYALLINHGPSTEALVPAPLYQGMRDGKIVRFEEITRTPLEVQDCLLGMLSDRVMTGPELTGEASQLYAREGFNIIATANTRDRGVNEMSAALKRRFDFETVFPIMDFAQELELVASASARLLAHSGIPHKVPDAVLELLVRTFRDLRANGEKKTSMDTLTAIMSTAEAVNVAHAVGVRAWFLANRAGEPADLVECIAGTIVKDNEEDRARLRRYFEQRVATHKEAHWQAYYQARHRLP</sequence>
<gene>
    <name type="primary">yehL</name>
    <name type="ordered locus">b2119</name>
    <name type="ordered locus">JW5349</name>
</gene>
<organism>
    <name type="scientific">Escherichia coli (strain K12)</name>
    <dbReference type="NCBI Taxonomy" id="83333"/>
    <lineage>
        <taxon>Bacteria</taxon>
        <taxon>Pseudomonadati</taxon>
        <taxon>Pseudomonadota</taxon>
        <taxon>Gammaproteobacteria</taxon>
        <taxon>Enterobacterales</taxon>
        <taxon>Enterobacteriaceae</taxon>
        <taxon>Escherichia</taxon>
    </lineage>
</organism>
<accession>P33348</accession>
<accession>Q2MAW1</accession>
<feature type="chain" id="PRO_0000169133" description="Uncharacterized protein YehL">
    <location>
        <begin position="1"/>
        <end position="362"/>
    </location>
</feature>
<dbReference type="EMBL" id="U00007">
    <property type="protein sequence ID" value="AAA60480.1"/>
    <property type="status" value="ALT_INIT"/>
    <property type="molecule type" value="Genomic_DNA"/>
</dbReference>
<dbReference type="EMBL" id="U00096">
    <property type="protein sequence ID" value="AAC75180.2"/>
    <property type="molecule type" value="Genomic_DNA"/>
</dbReference>
<dbReference type="EMBL" id="AP009048">
    <property type="protein sequence ID" value="BAE76595.1"/>
    <property type="molecule type" value="Genomic_DNA"/>
</dbReference>
<dbReference type="PIR" id="F64979">
    <property type="entry name" value="F64979"/>
</dbReference>
<dbReference type="RefSeq" id="NP_416623.2">
    <property type="nucleotide sequence ID" value="NC_000913.3"/>
</dbReference>
<dbReference type="RefSeq" id="WP_001350535.1">
    <property type="nucleotide sequence ID" value="NZ_LN832404.1"/>
</dbReference>
<dbReference type="BioGRID" id="4260440">
    <property type="interactions" value="8"/>
</dbReference>
<dbReference type="DIP" id="DIP-11902N"/>
<dbReference type="FunCoup" id="P33348">
    <property type="interactions" value="46"/>
</dbReference>
<dbReference type="IntAct" id="P33348">
    <property type="interactions" value="1"/>
</dbReference>
<dbReference type="STRING" id="511145.b2119"/>
<dbReference type="PaxDb" id="511145-b2119"/>
<dbReference type="EnsemblBacteria" id="AAC75180">
    <property type="protein sequence ID" value="AAC75180"/>
    <property type="gene ID" value="b2119"/>
</dbReference>
<dbReference type="GeneID" id="946656"/>
<dbReference type="KEGG" id="ecj:JW5349"/>
<dbReference type="KEGG" id="eco:b2119"/>
<dbReference type="KEGG" id="ecoc:C3026_11885"/>
<dbReference type="PATRIC" id="fig|1411691.4.peg.127"/>
<dbReference type="EchoBASE" id="EB1938"/>
<dbReference type="eggNOG" id="COG0714">
    <property type="taxonomic scope" value="Bacteria"/>
</dbReference>
<dbReference type="HOGENOM" id="CLU_065561_0_0_6"/>
<dbReference type="InParanoid" id="P33348"/>
<dbReference type="OMA" id="VWQEYLE"/>
<dbReference type="OrthoDB" id="9768555at2"/>
<dbReference type="PhylomeDB" id="P33348"/>
<dbReference type="BioCyc" id="EcoCyc:EG11998-MONOMER"/>
<dbReference type="PRO" id="PR:P33348"/>
<dbReference type="Proteomes" id="UP000000625">
    <property type="component" value="Chromosome"/>
</dbReference>
<dbReference type="GO" id="GO:0005524">
    <property type="term" value="F:ATP binding"/>
    <property type="evidence" value="ECO:0007669"/>
    <property type="project" value="InterPro"/>
</dbReference>
<dbReference type="GO" id="GO:0016887">
    <property type="term" value="F:ATP hydrolysis activity"/>
    <property type="evidence" value="ECO:0007669"/>
    <property type="project" value="InterPro"/>
</dbReference>
<dbReference type="Gene3D" id="3.40.50.300">
    <property type="entry name" value="P-loop containing nucleotide triphosphate hydrolases"/>
    <property type="match status" value="1"/>
</dbReference>
<dbReference type="InterPro" id="IPR003593">
    <property type="entry name" value="AAA+_ATPase"/>
</dbReference>
<dbReference type="InterPro" id="IPR011704">
    <property type="entry name" value="ATPase_dyneun-rel_AAA"/>
</dbReference>
<dbReference type="InterPro" id="IPR050764">
    <property type="entry name" value="CbbQ/NirQ/NorQ/GpvN"/>
</dbReference>
<dbReference type="InterPro" id="IPR027417">
    <property type="entry name" value="P-loop_NTPase"/>
</dbReference>
<dbReference type="PANTHER" id="PTHR42759:SF1">
    <property type="entry name" value="MAGNESIUM-CHELATASE SUBUNIT CHLD"/>
    <property type="match status" value="1"/>
</dbReference>
<dbReference type="PANTHER" id="PTHR42759">
    <property type="entry name" value="MOXR FAMILY PROTEIN"/>
    <property type="match status" value="1"/>
</dbReference>
<dbReference type="Pfam" id="PF07728">
    <property type="entry name" value="AAA_5"/>
    <property type="match status" value="1"/>
</dbReference>
<dbReference type="SMART" id="SM00382">
    <property type="entry name" value="AAA"/>
    <property type="match status" value="1"/>
</dbReference>
<dbReference type="SUPFAM" id="SSF52540">
    <property type="entry name" value="P-loop containing nucleoside triphosphate hydrolases"/>
    <property type="match status" value="1"/>
</dbReference>